<dbReference type="EC" id="2.8.1.13" evidence="1"/>
<dbReference type="EMBL" id="CP000896">
    <property type="protein sequence ID" value="ABX81177.1"/>
    <property type="molecule type" value="Genomic_DNA"/>
</dbReference>
<dbReference type="RefSeq" id="WP_012242508.1">
    <property type="nucleotide sequence ID" value="NC_010163.1"/>
</dbReference>
<dbReference type="SMR" id="A9NFP7"/>
<dbReference type="STRING" id="441768.ACL_0559"/>
<dbReference type="GeneID" id="41338737"/>
<dbReference type="KEGG" id="acl:ACL_0559"/>
<dbReference type="eggNOG" id="COG0482">
    <property type="taxonomic scope" value="Bacteria"/>
</dbReference>
<dbReference type="HOGENOM" id="CLU_035188_1_0_14"/>
<dbReference type="OrthoDB" id="9800696at2"/>
<dbReference type="Proteomes" id="UP000008558">
    <property type="component" value="Chromosome"/>
</dbReference>
<dbReference type="GO" id="GO:0005737">
    <property type="term" value="C:cytoplasm"/>
    <property type="evidence" value="ECO:0007669"/>
    <property type="project" value="UniProtKB-SubCell"/>
</dbReference>
<dbReference type="GO" id="GO:0005524">
    <property type="term" value="F:ATP binding"/>
    <property type="evidence" value="ECO:0007669"/>
    <property type="project" value="UniProtKB-KW"/>
</dbReference>
<dbReference type="GO" id="GO:0000049">
    <property type="term" value="F:tRNA binding"/>
    <property type="evidence" value="ECO:0007669"/>
    <property type="project" value="UniProtKB-KW"/>
</dbReference>
<dbReference type="GO" id="GO:0103016">
    <property type="term" value="F:tRNA-uridine 2-sulfurtransferase activity"/>
    <property type="evidence" value="ECO:0007669"/>
    <property type="project" value="UniProtKB-EC"/>
</dbReference>
<dbReference type="GO" id="GO:0002143">
    <property type="term" value="P:tRNA wobble position uridine thiolation"/>
    <property type="evidence" value="ECO:0007669"/>
    <property type="project" value="TreeGrafter"/>
</dbReference>
<dbReference type="CDD" id="cd01998">
    <property type="entry name" value="MnmA_TRMU-like"/>
    <property type="match status" value="1"/>
</dbReference>
<dbReference type="FunFam" id="2.30.30.280:FF:000001">
    <property type="entry name" value="tRNA-specific 2-thiouridylase MnmA"/>
    <property type="match status" value="1"/>
</dbReference>
<dbReference type="FunFam" id="3.40.50.620:FF:000004">
    <property type="entry name" value="tRNA-specific 2-thiouridylase MnmA"/>
    <property type="match status" value="1"/>
</dbReference>
<dbReference type="Gene3D" id="2.30.30.280">
    <property type="entry name" value="Adenine nucleotide alpha hydrolases-like domains"/>
    <property type="match status" value="1"/>
</dbReference>
<dbReference type="Gene3D" id="3.40.50.620">
    <property type="entry name" value="HUPs"/>
    <property type="match status" value="1"/>
</dbReference>
<dbReference type="Gene3D" id="2.40.30.10">
    <property type="entry name" value="Translation factors"/>
    <property type="match status" value="1"/>
</dbReference>
<dbReference type="HAMAP" id="MF_00144">
    <property type="entry name" value="tRNA_thiouridyl_MnmA"/>
    <property type="match status" value="1"/>
</dbReference>
<dbReference type="InterPro" id="IPR004506">
    <property type="entry name" value="MnmA-like"/>
</dbReference>
<dbReference type="InterPro" id="IPR046885">
    <property type="entry name" value="MnmA-like_C"/>
</dbReference>
<dbReference type="InterPro" id="IPR046884">
    <property type="entry name" value="MnmA-like_central"/>
</dbReference>
<dbReference type="InterPro" id="IPR023382">
    <property type="entry name" value="MnmA-like_central_sf"/>
</dbReference>
<dbReference type="InterPro" id="IPR014729">
    <property type="entry name" value="Rossmann-like_a/b/a_fold"/>
</dbReference>
<dbReference type="NCBIfam" id="NF001138">
    <property type="entry name" value="PRK00143.1"/>
    <property type="match status" value="1"/>
</dbReference>
<dbReference type="NCBIfam" id="TIGR00420">
    <property type="entry name" value="trmU"/>
    <property type="match status" value="1"/>
</dbReference>
<dbReference type="PANTHER" id="PTHR11933:SF5">
    <property type="entry name" value="MITOCHONDRIAL TRNA-SPECIFIC 2-THIOURIDYLASE 1"/>
    <property type="match status" value="1"/>
</dbReference>
<dbReference type="PANTHER" id="PTHR11933">
    <property type="entry name" value="TRNA 5-METHYLAMINOMETHYL-2-THIOURIDYLATE -METHYLTRANSFERASE"/>
    <property type="match status" value="1"/>
</dbReference>
<dbReference type="Pfam" id="PF03054">
    <property type="entry name" value="tRNA_Me_trans"/>
    <property type="match status" value="1"/>
</dbReference>
<dbReference type="Pfam" id="PF20258">
    <property type="entry name" value="tRNA_Me_trans_C"/>
    <property type="match status" value="1"/>
</dbReference>
<dbReference type="Pfam" id="PF20259">
    <property type="entry name" value="tRNA_Me_trans_M"/>
    <property type="match status" value="1"/>
</dbReference>
<dbReference type="SUPFAM" id="SSF52402">
    <property type="entry name" value="Adenine nucleotide alpha hydrolases-like"/>
    <property type="match status" value="1"/>
</dbReference>
<accession>A9NFP7</accession>
<feature type="chain" id="PRO_0000349495" description="tRNA-specific 2-thiouridylase MnmA">
    <location>
        <begin position="1"/>
        <end position="375"/>
    </location>
</feature>
<feature type="region of interest" description="Interaction with target base in tRNA" evidence="1">
    <location>
        <begin position="104"/>
        <end position="106"/>
    </location>
</feature>
<feature type="region of interest" description="Interaction with tRNA" evidence="1">
    <location>
        <begin position="155"/>
        <end position="157"/>
    </location>
</feature>
<feature type="region of interest" description="Interaction with tRNA" evidence="1">
    <location>
        <begin position="313"/>
        <end position="314"/>
    </location>
</feature>
<feature type="active site" description="Nucleophile" evidence="1">
    <location>
        <position position="109"/>
    </location>
</feature>
<feature type="active site" description="Cysteine persulfide intermediate" evidence="1">
    <location>
        <position position="205"/>
    </location>
</feature>
<feature type="binding site" evidence="1">
    <location>
        <begin position="8"/>
        <end position="15"/>
    </location>
    <ligand>
        <name>ATP</name>
        <dbReference type="ChEBI" id="CHEBI:30616"/>
    </ligand>
</feature>
<feature type="binding site" evidence="1">
    <location>
        <position position="34"/>
    </location>
    <ligand>
        <name>ATP</name>
        <dbReference type="ChEBI" id="CHEBI:30616"/>
    </ligand>
</feature>
<feature type="binding site" evidence="1">
    <location>
        <position position="133"/>
    </location>
    <ligand>
        <name>ATP</name>
        <dbReference type="ChEBI" id="CHEBI:30616"/>
    </ligand>
</feature>
<feature type="site" description="Interaction with tRNA" evidence="1">
    <location>
        <position position="134"/>
    </location>
</feature>
<feature type="site" description="Interaction with tRNA" evidence="1">
    <location>
        <position position="346"/>
    </location>
</feature>
<feature type="disulfide bond" description="Alternate" evidence="1">
    <location>
        <begin position="109"/>
        <end position="205"/>
    </location>
</feature>
<proteinExistence type="inferred from homology"/>
<organism>
    <name type="scientific">Acholeplasma laidlawii (strain PG-8A)</name>
    <dbReference type="NCBI Taxonomy" id="441768"/>
    <lineage>
        <taxon>Bacteria</taxon>
        <taxon>Bacillati</taxon>
        <taxon>Mycoplasmatota</taxon>
        <taxon>Mollicutes</taxon>
        <taxon>Acholeplasmatales</taxon>
        <taxon>Acholeplasmataceae</taxon>
        <taxon>Acholeplasma</taxon>
    </lineage>
</organism>
<name>MNMA_ACHLI</name>
<sequence length="375" mass="43315">MKKKVLIGLSGGVDSSVAALILLQQGYDVEAVFMRNWDSATNMDFRGNPTLYDETCEQEKDYQDALKVANKLGIKLHRVDFIHEYWDRVFSYFIDEYEKNRTPNPDVLCNNEIKFKAFIDYSEKFKPDYIAMGHYAQIDHTGDEPKLIRAVDSNKDQTYFLSQLKTEQLRNVLFPIGNLPKSEVRRIAKEHDLATADKKDSTGICFIGERHFNEFLLNYLPAKEGDMRRLDGTFIKRHFGLMNYTIGQRKGLGIGGTTDTTDAWFVVGKDLSTNTLYVEPGFEHPYLYSDEALITEVKWRGAKRDGKFTAKFRYRQEDQDVEIKWIDDETFKVFYPQKIRAVTPGQVCAIYEDEVCVGSGFISVVYNEGEKRLYS</sequence>
<keyword id="KW-0067">ATP-binding</keyword>
<keyword id="KW-0963">Cytoplasm</keyword>
<keyword id="KW-1015">Disulfide bond</keyword>
<keyword id="KW-0547">Nucleotide-binding</keyword>
<keyword id="KW-1185">Reference proteome</keyword>
<keyword id="KW-0694">RNA-binding</keyword>
<keyword id="KW-0808">Transferase</keyword>
<keyword id="KW-0819">tRNA processing</keyword>
<keyword id="KW-0820">tRNA-binding</keyword>
<reference key="1">
    <citation type="journal article" date="2011" name="J. Bacteriol.">
        <title>Complete genome and proteome of Acholeplasma laidlawii.</title>
        <authorList>
            <person name="Lazarev V.N."/>
            <person name="Levitskii S.A."/>
            <person name="Basovskii Y.I."/>
            <person name="Chukin M.M."/>
            <person name="Akopian T.A."/>
            <person name="Vereshchagin V.V."/>
            <person name="Kostrjukova E.S."/>
            <person name="Kovaleva G.Y."/>
            <person name="Kazanov M.D."/>
            <person name="Malko D.B."/>
            <person name="Vitreschak A.G."/>
            <person name="Sernova N.V."/>
            <person name="Gelfand M.S."/>
            <person name="Demina I.A."/>
            <person name="Serebryakova M.V."/>
            <person name="Galyamina M.A."/>
            <person name="Vtyurin N.N."/>
            <person name="Rogov S.I."/>
            <person name="Alexeev D.G."/>
            <person name="Ladygina V.G."/>
            <person name="Govorun V.M."/>
        </authorList>
    </citation>
    <scope>NUCLEOTIDE SEQUENCE [LARGE SCALE GENOMIC DNA]</scope>
    <source>
        <strain>PG-8A</strain>
    </source>
</reference>
<protein>
    <recommendedName>
        <fullName evidence="1">tRNA-specific 2-thiouridylase MnmA</fullName>
        <ecNumber evidence="1">2.8.1.13</ecNumber>
    </recommendedName>
</protein>
<evidence type="ECO:0000255" key="1">
    <source>
        <dbReference type="HAMAP-Rule" id="MF_00144"/>
    </source>
</evidence>
<comment type="function">
    <text evidence="1">Catalyzes the 2-thiolation of uridine at the wobble position (U34) of tRNA, leading to the formation of s(2)U34.</text>
</comment>
<comment type="catalytic activity">
    <reaction evidence="1">
        <text>S-sulfanyl-L-cysteinyl-[protein] + uridine(34) in tRNA + AH2 + ATP = 2-thiouridine(34) in tRNA + L-cysteinyl-[protein] + A + AMP + diphosphate + H(+)</text>
        <dbReference type="Rhea" id="RHEA:47032"/>
        <dbReference type="Rhea" id="RHEA-COMP:10131"/>
        <dbReference type="Rhea" id="RHEA-COMP:11726"/>
        <dbReference type="Rhea" id="RHEA-COMP:11727"/>
        <dbReference type="Rhea" id="RHEA-COMP:11728"/>
        <dbReference type="ChEBI" id="CHEBI:13193"/>
        <dbReference type="ChEBI" id="CHEBI:15378"/>
        <dbReference type="ChEBI" id="CHEBI:17499"/>
        <dbReference type="ChEBI" id="CHEBI:29950"/>
        <dbReference type="ChEBI" id="CHEBI:30616"/>
        <dbReference type="ChEBI" id="CHEBI:33019"/>
        <dbReference type="ChEBI" id="CHEBI:61963"/>
        <dbReference type="ChEBI" id="CHEBI:65315"/>
        <dbReference type="ChEBI" id="CHEBI:87170"/>
        <dbReference type="ChEBI" id="CHEBI:456215"/>
        <dbReference type="EC" id="2.8.1.13"/>
    </reaction>
</comment>
<comment type="subcellular location">
    <subcellularLocation>
        <location evidence="1">Cytoplasm</location>
    </subcellularLocation>
</comment>
<comment type="similarity">
    <text evidence="1">Belongs to the MnmA/TRMU family.</text>
</comment>
<gene>
    <name evidence="1" type="primary">mnmA</name>
    <name type="ordered locus">ACL_0559</name>
</gene>